<organism>
    <name type="scientific">Influenza A virus (strain A/Seal/Massachusetts/1/1980 H7N7)</name>
    <dbReference type="NCBI Taxonomy" id="384493"/>
    <lineage>
        <taxon>Viruses</taxon>
        <taxon>Riboviria</taxon>
        <taxon>Orthornavirae</taxon>
        <taxon>Negarnaviricota</taxon>
        <taxon>Polyploviricotina</taxon>
        <taxon>Insthoviricetes</taxon>
        <taxon>Articulavirales</taxon>
        <taxon>Orthomyxoviridae</taxon>
        <taxon>Alphainfluenzavirus</taxon>
        <taxon>Alphainfluenzavirus influenzae</taxon>
        <taxon>Influenza A virus</taxon>
    </lineage>
</organism>
<name>NCAP_I80A2</name>
<reference key="1">
    <citation type="journal article" date="1990" name="Virology">
        <title>Derivation of the nucleoproteins (NP) of influenza A viruses isolated from marine mammals.</title>
        <authorList>
            <person name="Mandler J."/>
            <person name="Gorman O.T."/>
            <person name="Ludwig S."/>
            <person name="Schroeder E."/>
            <person name="Fitch W.M."/>
            <person name="Webster R.G."/>
            <person name="Scholtissek C."/>
        </authorList>
    </citation>
    <scope>NUCLEOTIDE SEQUENCE [GENOMIC RNA]</scope>
</reference>
<reference key="2">
    <citation type="journal article" date="2005" name="Proc. Natl. Acad. Sci. U.S.A.">
        <title>The viral polymerase mediates adaptation of an avian influenza virus to a mammalian host.</title>
        <authorList>
            <person name="Gabriel G."/>
            <person name="Dauber B."/>
            <person name="Wolff T."/>
            <person name="Planz O."/>
            <person name="Klenk H.D."/>
            <person name="Stech J."/>
        </authorList>
    </citation>
    <scope>NUCLEOTIDE SEQUENCE [GENOMIC RNA]</scope>
    <source>
        <strain>SC35M mouse-adapted</strain>
    </source>
</reference>
<gene>
    <name evidence="1" type="primary">NP</name>
</gene>
<sequence length="498" mass="56323">MASQGTKRSYEQMETGGERQNATEIRASVGRMVGGIGRFYIQMCTELKLSDYEGRLIQNSITIERMVLSAFDERRNKYLEEHPSAGKDPKKTGGPIYRRRDGKWMRELILYDKEEIRRIWRQANNGEDATAGLTHLMIWHSNLNDATYQRTRALVRTGMDPRMCSLMQGSTLPRRSGAAGAAVKGVGTMVMELIRMIKRGINDRNFWRGENGRRTRIAYERMCNILKGKFQTAAQRAMMDQVRESRNPGNAEIEDLIFLARSALILRGSVAHKSCLPACVYGLSVASGYDFEREGYSLVGIDPFRLLQNSQVFSLIRPNENPAHKSQLVWMACHSAAFEDLRVSSFIRGARVVPRGQLSTRGVQIASNENMETMDSSTLELRSRYWAIRTRSGGNTNQQRASAGQISVQPTFSVQRNLPFERATIMAAFTGNTEGRTSDMRTEIIRMMENARPEDVSFQGRGVFELSDEKATNPIVPSFDMNNEGSYFFGDNAEEYNN</sequence>
<protein>
    <recommendedName>
        <fullName evidence="1">Nucleoprotein</fullName>
    </recommendedName>
    <alternativeName>
        <fullName evidence="1">Nucleocapsid protein</fullName>
        <shortName evidence="1">Protein N</shortName>
    </alternativeName>
</protein>
<dbReference type="EMBL" id="M27518">
    <property type="protein sequence ID" value="AAA43656.1"/>
    <property type="molecule type" value="Genomic_RNA"/>
</dbReference>
<dbReference type="EMBL" id="DQ266096">
    <property type="protein sequence ID" value="ABB90269.1"/>
    <property type="molecule type" value="Genomic_RNA"/>
</dbReference>
<dbReference type="SMR" id="P26053"/>
<dbReference type="PRO" id="PR:P26053"/>
<dbReference type="Proteomes" id="UP000008576">
    <property type="component" value="Genome"/>
</dbReference>
<dbReference type="GO" id="GO:0019029">
    <property type="term" value="C:helical viral capsid"/>
    <property type="evidence" value="ECO:0007669"/>
    <property type="project" value="UniProtKB-UniRule"/>
</dbReference>
<dbReference type="GO" id="GO:0043657">
    <property type="term" value="C:host cell"/>
    <property type="evidence" value="ECO:0007669"/>
    <property type="project" value="GOC"/>
</dbReference>
<dbReference type="GO" id="GO:0042025">
    <property type="term" value="C:host cell nucleus"/>
    <property type="evidence" value="ECO:0007669"/>
    <property type="project" value="UniProtKB-SubCell"/>
</dbReference>
<dbReference type="GO" id="GO:1990904">
    <property type="term" value="C:ribonucleoprotein complex"/>
    <property type="evidence" value="ECO:0007669"/>
    <property type="project" value="UniProtKB-KW"/>
</dbReference>
<dbReference type="GO" id="GO:0019013">
    <property type="term" value="C:viral nucleocapsid"/>
    <property type="evidence" value="ECO:0007669"/>
    <property type="project" value="UniProtKB-UniRule"/>
</dbReference>
<dbReference type="GO" id="GO:0003723">
    <property type="term" value="F:RNA binding"/>
    <property type="evidence" value="ECO:0007669"/>
    <property type="project" value="UniProtKB-UniRule"/>
</dbReference>
<dbReference type="GO" id="GO:0005198">
    <property type="term" value="F:structural molecule activity"/>
    <property type="evidence" value="ECO:0007669"/>
    <property type="project" value="UniProtKB-UniRule"/>
</dbReference>
<dbReference type="GO" id="GO:0046718">
    <property type="term" value="P:symbiont entry into host cell"/>
    <property type="evidence" value="ECO:0007669"/>
    <property type="project" value="UniProtKB-KW"/>
</dbReference>
<dbReference type="GO" id="GO:0075732">
    <property type="term" value="P:viral penetration into host nucleus"/>
    <property type="evidence" value="ECO:0007669"/>
    <property type="project" value="UniProtKB-UniRule"/>
</dbReference>
<dbReference type="HAMAP" id="MF_04070">
    <property type="entry name" value="INFV_NCAP"/>
    <property type="match status" value="1"/>
</dbReference>
<dbReference type="InterPro" id="IPR002141">
    <property type="entry name" value="Flu_NP"/>
</dbReference>
<dbReference type="Pfam" id="PF00506">
    <property type="entry name" value="Flu_NP"/>
    <property type="match status" value="1"/>
</dbReference>
<dbReference type="SUPFAM" id="SSF161003">
    <property type="entry name" value="flu NP-like"/>
    <property type="match status" value="1"/>
</dbReference>
<feature type="chain" id="PRO_0000079098" description="Nucleoprotein">
    <location>
        <begin position="1"/>
        <end position="498"/>
    </location>
</feature>
<feature type="region of interest" description="Disordered" evidence="2">
    <location>
        <begin position="1"/>
        <end position="21"/>
    </location>
</feature>
<feature type="short sequence motif" description="Unconventional nuclear localization signal" evidence="1">
    <location>
        <begin position="1"/>
        <end position="18"/>
    </location>
</feature>
<feature type="short sequence motif" description="Bipartite nuclear localization signal" evidence="1">
    <location>
        <begin position="198"/>
        <end position="216"/>
    </location>
</feature>
<feature type="sequence variant" description="In strain: SC35M mouse-adapted.">
    <original>N</original>
    <variation>K</variation>
    <location>
        <position position="319"/>
    </location>
</feature>
<feature type="sequence variant" description="In strain: SC35M mouse-adapted.">
    <original>D</original>
    <variation>E</variation>
    <location>
        <position position="375"/>
    </location>
</feature>
<evidence type="ECO:0000255" key="1">
    <source>
        <dbReference type="HAMAP-Rule" id="MF_04070"/>
    </source>
</evidence>
<evidence type="ECO:0000256" key="2">
    <source>
        <dbReference type="SAM" id="MobiDB-lite"/>
    </source>
</evidence>
<comment type="function">
    <text evidence="1">Encapsidates the negative strand viral RNA, protecting it from nucleases. The encapsidated genomic RNA is termed the ribonucleoprotein (RNP) and serves as template for transcription and replication. The RNP needs to be localized in the host nucleus to start an infectious cycle, but is too large to diffuse through the nuclear pore complex. NP comprises at least 2 nuclear localization signals that are responsible for the active RNP import into the nucleus through cellular importin alpha/beta pathway. Later in the infection, nclear export of RNPs are mediated through viral proteins NEP interacting with M1 which binds nucleoproteins. It is possible that nucleoprotein binds directly host exportin-1/XPO1 and plays an active role in RNPs nuclear export. M1 interaction with RNP seems to hide nucleoprotein's nuclear localization signals. Soon after a virion infects a new cell, M1 dissociates from the RNP under acidification of the virion driven by M2 protein. Dissociation of M1 from RNP unmasks nucleoprotein's nuclear localization signals, targeting the RNP to the nucleus.</text>
</comment>
<comment type="subunit">
    <text evidence="1">Homomultimerizes to form the nucleocapsid. May bind host exportin-1/XPO1. Binds to viral genomic RNA. Protein-RNA contacts are mediated by a combination of electrostatic interactions between positively charged residues and the phosphate backbone and planar interactions between aromatic side chains and bases.</text>
</comment>
<comment type="subcellular location">
    <subcellularLocation>
        <location evidence="1">Virion</location>
    </subcellularLocation>
    <subcellularLocation>
        <location evidence="1">Host nucleus</location>
    </subcellularLocation>
</comment>
<comment type="PTM">
    <text evidence="1">Late in virus-infected cells, may be cleaved from a 56-kDa protein to a 53-kDa protein by a cellular caspase. This cleavage might be a marker for the onset of apoptosis in infected cells or have a specific function in virus host interaction.</text>
</comment>
<comment type="miscellaneous">
    <text>SC35 was derived from A/Seal/Massachussetts/1/80 (H7N7) by serial passages in chicken embryo cells, thereby acquiring a multibasic cleavage site in its hemagglutinin (HA) and becoming 100% lethal for chickens. SC35 was then passaged 11 times in mouse lung, yielding the mouse-adapted variant SC35M.</text>
</comment>
<comment type="similarity">
    <text evidence="1">Belongs to the influenza viruses nucleoprotein family.</text>
</comment>
<keyword id="KW-0167">Capsid protein</keyword>
<keyword id="KW-1139">Helical capsid protein</keyword>
<keyword id="KW-1048">Host nucleus</keyword>
<keyword id="KW-0945">Host-virus interaction</keyword>
<keyword id="KW-0687">Ribonucleoprotein</keyword>
<keyword id="KW-0694">RNA-binding</keyword>
<keyword id="KW-0543">Viral nucleoprotein</keyword>
<keyword id="KW-1163">Viral penetration into host nucleus</keyword>
<keyword id="KW-0946">Virion</keyword>
<keyword id="KW-1160">Virus entry into host cell</keyword>
<proteinExistence type="inferred from homology"/>
<organismHost>
    <name type="scientific">Aves</name>
    <dbReference type="NCBI Taxonomy" id="8782"/>
</organismHost>
<organismHost>
    <name type="scientific">Equus caballus</name>
    <name type="common">Horse</name>
    <dbReference type="NCBI Taxonomy" id="9796"/>
</organismHost>
<organismHost>
    <name type="scientific">Homo sapiens</name>
    <name type="common">Human</name>
    <dbReference type="NCBI Taxonomy" id="9606"/>
</organismHost>
<organismHost>
    <name type="scientific">Phocidae</name>
    <name type="common">true seals</name>
    <dbReference type="NCBI Taxonomy" id="9709"/>
</organismHost>
<accession>P26053</accession>
<accession>Q2VC94</accession>